<gene>
    <name evidence="1" type="primary">minar2</name>
</gene>
<reference key="1">
    <citation type="journal article" date="2013" name="Nature">
        <title>The zebrafish reference genome sequence and its relationship to the human genome.</title>
        <authorList>
            <person name="Howe K."/>
            <person name="Clark M.D."/>
            <person name="Torroja C.F."/>
            <person name="Torrance J."/>
            <person name="Berthelot C."/>
            <person name="Muffato M."/>
            <person name="Collins J.E."/>
            <person name="Humphray S."/>
            <person name="McLaren K."/>
            <person name="Matthews L."/>
            <person name="McLaren S."/>
            <person name="Sealy I."/>
            <person name="Caccamo M."/>
            <person name="Churcher C."/>
            <person name="Scott C."/>
            <person name="Barrett J.C."/>
            <person name="Koch R."/>
            <person name="Rauch G.J."/>
            <person name="White S."/>
            <person name="Chow W."/>
            <person name="Kilian B."/>
            <person name="Quintais L.T."/>
            <person name="Guerra-Assuncao J.A."/>
            <person name="Zhou Y."/>
            <person name="Gu Y."/>
            <person name="Yen J."/>
            <person name="Vogel J.H."/>
            <person name="Eyre T."/>
            <person name="Redmond S."/>
            <person name="Banerjee R."/>
            <person name="Chi J."/>
            <person name="Fu B."/>
            <person name="Langley E."/>
            <person name="Maguire S.F."/>
            <person name="Laird G.K."/>
            <person name="Lloyd D."/>
            <person name="Kenyon E."/>
            <person name="Donaldson S."/>
            <person name="Sehra H."/>
            <person name="Almeida-King J."/>
            <person name="Loveland J."/>
            <person name="Trevanion S."/>
            <person name="Jones M."/>
            <person name="Quail M."/>
            <person name="Willey D."/>
            <person name="Hunt A."/>
            <person name="Burton J."/>
            <person name="Sims S."/>
            <person name="McLay K."/>
            <person name="Plumb B."/>
            <person name="Davis J."/>
            <person name="Clee C."/>
            <person name="Oliver K."/>
            <person name="Clark R."/>
            <person name="Riddle C."/>
            <person name="Elliot D."/>
            <person name="Threadgold G."/>
            <person name="Harden G."/>
            <person name="Ware D."/>
            <person name="Begum S."/>
            <person name="Mortimore B."/>
            <person name="Kerry G."/>
            <person name="Heath P."/>
            <person name="Phillimore B."/>
            <person name="Tracey A."/>
            <person name="Corby N."/>
            <person name="Dunn M."/>
            <person name="Johnson C."/>
            <person name="Wood J."/>
            <person name="Clark S."/>
            <person name="Pelan S."/>
            <person name="Griffiths G."/>
            <person name="Smith M."/>
            <person name="Glithero R."/>
            <person name="Howden P."/>
            <person name="Barker N."/>
            <person name="Lloyd C."/>
            <person name="Stevens C."/>
            <person name="Harley J."/>
            <person name="Holt K."/>
            <person name="Panagiotidis G."/>
            <person name="Lovell J."/>
            <person name="Beasley H."/>
            <person name="Henderson C."/>
            <person name="Gordon D."/>
            <person name="Auger K."/>
            <person name="Wright D."/>
            <person name="Collins J."/>
            <person name="Raisen C."/>
            <person name="Dyer L."/>
            <person name="Leung K."/>
            <person name="Robertson L."/>
            <person name="Ambridge K."/>
            <person name="Leongamornlert D."/>
            <person name="McGuire S."/>
            <person name="Gilderthorp R."/>
            <person name="Griffiths C."/>
            <person name="Manthravadi D."/>
            <person name="Nichol S."/>
            <person name="Barker G."/>
            <person name="Whitehead S."/>
            <person name="Kay M."/>
            <person name="Brown J."/>
            <person name="Murnane C."/>
            <person name="Gray E."/>
            <person name="Humphries M."/>
            <person name="Sycamore N."/>
            <person name="Barker D."/>
            <person name="Saunders D."/>
            <person name="Wallis J."/>
            <person name="Babbage A."/>
            <person name="Hammond S."/>
            <person name="Mashreghi-Mohammadi M."/>
            <person name="Barr L."/>
            <person name="Martin S."/>
            <person name="Wray P."/>
            <person name="Ellington A."/>
            <person name="Matthews N."/>
            <person name="Ellwood M."/>
            <person name="Woodmansey R."/>
            <person name="Clark G."/>
            <person name="Cooper J."/>
            <person name="Tromans A."/>
            <person name="Grafham D."/>
            <person name="Skuce C."/>
            <person name="Pandian R."/>
            <person name="Andrews R."/>
            <person name="Harrison E."/>
            <person name="Kimberley A."/>
            <person name="Garnett J."/>
            <person name="Fosker N."/>
            <person name="Hall R."/>
            <person name="Garner P."/>
            <person name="Kelly D."/>
            <person name="Bird C."/>
            <person name="Palmer S."/>
            <person name="Gehring I."/>
            <person name="Berger A."/>
            <person name="Dooley C.M."/>
            <person name="Ersan-Urun Z."/>
            <person name="Eser C."/>
            <person name="Geiger H."/>
            <person name="Geisler M."/>
            <person name="Karotki L."/>
            <person name="Kirn A."/>
            <person name="Konantz J."/>
            <person name="Konantz M."/>
            <person name="Oberlander M."/>
            <person name="Rudolph-Geiger S."/>
            <person name="Teucke M."/>
            <person name="Lanz C."/>
            <person name="Raddatz G."/>
            <person name="Osoegawa K."/>
            <person name="Zhu B."/>
            <person name="Rapp A."/>
            <person name="Widaa S."/>
            <person name="Langford C."/>
            <person name="Yang F."/>
            <person name="Schuster S.C."/>
            <person name="Carter N.P."/>
            <person name="Harrow J."/>
            <person name="Ning Z."/>
            <person name="Herrero J."/>
            <person name="Searle S.M."/>
            <person name="Enright A."/>
            <person name="Geisler R."/>
            <person name="Plasterk R.H."/>
            <person name="Lee C."/>
            <person name="Westerfield M."/>
            <person name="de Jong P.J."/>
            <person name="Zon L.I."/>
            <person name="Postlethwait J.H."/>
            <person name="Nusslein-Volhard C."/>
            <person name="Hubbard T.J."/>
            <person name="Roest Crollius H."/>
            <person name="Rogers J."/>
            <person name="Stemple D.L."/>
        </authorList>
    </citation>
    <scope>NUCLEOTIDE SEQUENCE [LARGE SCALE GENOMIC DNA]</scope>
    <source>
        <strain>Tuebingen</strain>
    </source>
</reference>
<reference key="2">
    <citation type="journal article" date="2022" name="Elife">
        <title>Kiaa1024L/Minar2 is essential for hearing by regulating cholesterol distribution in hair bundles.</title>
        <authorList>
            <person name="Gao G."/>
            <person name="Guo S."/>
            <person name="Zhang Q."/>
            <person name="Zhang H."/>
            <person name="Zhang C."/>
            <person name="Peng G."/>
        </authorList>
    </citation>
    <scope>FUNCTION</scope>
    <scope>SUBCELLULAR LOCATION</scope>
    <scope>TISSUE SPECIFICITY</scope>
    <scope>DISRUPTION PHENOTYPE</scope>
</reference>
<protein>
    <recommendedName>
        <fullName evidence="1">Major intrinsically disordered NOTCH2-binding receptor 1-like</fullName>
    </recommendedName>
    <alternativeName>
        <fullName evidence="1">Major intrinsically disordered NOTCH2-associated receptor 2</fullName>
    </alternativeName>
</protein>
<comment type="function">
    <text evidence="1 4">Binds cholesterol and may regulate the distribution and homeostasis of cholesterol in hair cells (PubMed:36317962). May play a role in angiogenesis (By similarity).</text>
</comment>
<comment type="subunit">
    <text evidence="1">Interacts with NOTCH2.</text>
</comment>
<comment type="subcellular location">
    <subcellularLocation>
        <location evidence="4">Lysosome membrane</location>
        <topology evidence="2">Single-pass membrane protein</topology>
    </subcellularLocation>
    <subcellularLocation>
        <location evidence="1">Endoplasmic reticulum membrane</location>
        <topology evidence="2">Single-pass membrane protein</topology>
    </subcellularLocation>
    <text evidence="4">Localizes to the stereocilia and the apical region of hair cell, apparently around and just below the cuticular plate. Co-localized with cholesterol in the stereocilia.</text>
</comment>
<comment type="tissue specificity">
    <text evidence="4">Highly expressed in the auditory hair cells.</text>
</comment>
<comment type="developmental stage">
    <text evidence="4">At 5 dpf, expressed in the hair cells of the inner ears and the lateral line neuromasts.</text>
</comment>
<comment type="disruption phenotype">
    <text evidence="4">Homozygous knockout fishs lacking minar2 are viable, and the body length and body weight of adults are normal compare to the wild-type. Fishs show hearing loss.</text>
</comment>
<comment type="similarity">
    <text evidence="5">Belongs to the MINAR family.</text>
</comment>
<evidence type="ECO:0000250" key="1">
    <source>
        <dbReference type="UniProtKB" id="P59773"/>
    </source>
</evidence>
<evidence type="ECO:0000255" key="2"/>
<evidence type="ECO:0000255" key="3">
    <source>
        <dbReference type="PROSITE-ProRule" id="PRU00498"/>
    </source>
</evidence>
<evidence type="ECO:0000269" key="4">
    <source>
    </source>
</evidence>
<evidence type="ECO:0000305" key="5"/>
<proteinExistence type="evidence at transcript level"/>
<sequence length="125" mass="14685">MFEDKELEKHITPQTLKPKIKQNPLYSHINIIQTEENKSKPSWTIQDYDRHTSHGQLADYMKEDPRDLSFWLEDLYTPGYDSLLKKKAAEMKRNKICKTFAFITLFVCAVVIIITVPIVVKQSRD</sequence>
<accession>F1QEA1</accession>
<name>MNARL_DANRE</name>
<dbReference type="EMBL" id="CR790388">
    <property type="status" value="NOT_ANNOTATED_CDS"/>
    <property type="molecule type" value="Genomic_DNA"/>
</dbReference>
<dbReference type="SMR" id="F1QEA1"/>
<dbReference type="FunCoup" id="F1QEA1">
    <property type="interactions" value="1209"/>
</dbReference>
<dbReference type="PaxDb" id="7955-ENSDARP00000102579"/>
<dbReference type="Ensembl" id="ENSDART00000112039">
    <property type="protein sequence ID" value="ENSDARP00000102579"/>
    <property type="gene ID" value="ENSDARG00000078922"/>
</dbReference>
<dbReference type="eggNOG" id="ENOG502RZQB">
    <property type="taxonomic scope" value="Eukaryota"/>
</dbReference>
<dbReference type="HOGENOM" id="CLU_120056_1_0_1"/>
<dbReference type="InParanoid" id="F1QEA1"/>
<dbReference type="OMA" id="EAMEDRK"/>
<dbReference type="Proteomes" id="UP000000437">
    <property type="component" value="Unplaced"/>
</dbReference>
<dbReference type="GO" id="GO:0005783">
    <property type="term" value="C:endoplasmic reticulum"/>
    <property type="evidence" value="ECO:0000250"/>
    <property type="project" value="UniProtKB"/>
</dbReference>
<dbReference type="GO" id="GO:0005789">
    <property type="term" value="C:endoplasmic reticulum membrane"/>
    <property type="evidence" value="ECO:0007669"/>
    <property type="project" value="UniProtKB-SubCell"/>
</dbReference>
<dbReference type="GO" id="GO:0005765">
    <property type="term" value="C:lysosomal membrane"/>
    <property type="evidence" value="ECO:0000250"/>
    <property type="project" value="UniProtKB"/>
</dbReference>
<dbReference type="GO" id="GO:0015485">
    <property type="term" value="F:cholesterol binding"/>
    <property type="evidence" value="ECO:0000250"/>
    <property type="project" value="UniProtKB"/>
</dbReference>
<dbReference type="GO" id="GO:0001525">
    <property type="term" value="P:angiogenesis"/>
    <property type="evidence" value="ECO:0000250"/>
    <property type="project" value="UniProtKB"/>
</dbReference>
<dbReference type="GO" id="GO:0042632">
    <property type="term" value="P:cholesterol homeostasis"/>
    <property type="evidence" value="ECO:0000315"/>
    <property type="project" value="UniProtKB"/>
</dbReference>
<dbReference type="InterPro" id="IPR039706">
    <property type="entry name" value="MINAR1-like"/>
</dbReference>
<dbReference type="InterPro" id="IPR009626">
    <property type="entry name" value="MINAR1-like_C"/>
</dbReference>
<dbReference type="PANTHER" id="PTHR31530">
    <property type="entry name" value="MAJOR INTRINSICALLY DISORDERED NOTCH2-BINDING RECEPTOR 1 MINAR1 FAMILY MEMBER"/>
    <property type="match status" value="1"/>
</dbReference>
<dbReference type="PANTHER" id="PTHR31530:SF4">
    <property type="entry name" value="MAJOR INTRINSICALLY DISORDERED NOTCH2-BINDING RECEPTOR 1-LIKE"/>
    <property type="match status" value="1"/>
</dbReference>
<dbReference type="Pfam" id="PF06789">
    <property type="entry name" value="MINAR1_C"/>
    <property type="match status" value="1"/>
</dbReference>
<organism>
    <name type="scientific">Danio rerio</name>
    <name type="common">Zebrafish</name>
    <name type="synonym">Brachydanio rerio</name>
    <dbReference type="NCBI Taxonomy" id="7955"/>
    <lineage>
        <taxon>Eukaryota</taxon>
        <taxon>Metazoa</taxon>
        <taxon>Chordata</taxon>
        <taxon>Craniata</taxon>
        <taxon>Vertebrata</taxon>
        <taxon>Euteleostomi</taxon>
        <taxon>Actinopterygii</taxon>
        <taxon>Neopterygii</taxon>
        <taxon>Teleostei</taxon>
        <taxon>Ostariophysi</taxon>
        <taxon>Cypriniformes</taxon>
        <taxon>Danionidae</taxon>
        <taxon>Danioninae</taxon>
        <taxon>Danio</taxon>
    </lineage>
</organism>
<feature type="chain" id="PRO_0000457621" description="Major intrinsically disordered NOTCH2-binding receptor 1-like">
    <location>
        <begin position="1"/>
        <end position="125"/>
    </location>
</feature>
<feature type="transmembrane region" description="Helical" evidence="2">
    <location>
        <begin position="100"/>
        <end position="120"/>
    </location>
</feature>
<feature type="glycosylation site" description="N-linked (GlcNAc...) asparagine" evidence="3">
    <location>
        <position position="37"/>
    </location>
</feature>
<keyword id="KW-0256">Endoplasmic reticulum</keyword>
<keyword id="KW-0325">Glycoprotein</keyword>
<keyword id="KW-0458">Lysosome</keyword>
<keyword id="KW-0472">Membrane</keyword>
<keyword id="KW-1185">Reference proteome</keyword>
<keyword id="KW-0812">Transmembrane</keyword>
<keyword id="KW-1133">Transmembrane helix</keyword>